<comment type="function">
    <text evidence="5">Flavoprotein monooxygenase required for N-hydroxylation of the two acylated lysine residues during mycobactin assembly, thus producing the hydroxamate groups necessary for iron sequestration.</text>
</comment>
<comment type="catalytic activity">
    <reaction>
        <text>L-lysine + NADPH + O2 = N(6)-hydroxy-L-lysine + NADP(+) + H2O</text>
        <dbReference type="Rhea" id="RHEA:23228"/>
        <dbReference type="ChEBI" id="CHEBI:15377"/>
        <dbReference type="ChEBI" id="CHEBI:15379"/>
        <dbReference type="ChEBI" id="CHEBI:32551"/>
        <dbReference type="ChEBI" id="CHEBI:57783"/>
        <dbReference type="ChEBI" id="CHEBI:57820"/>
        <dbReference type="ChEBI" id="CHEBI:58349"/>
        <dbReference type="EC" id="1.14.13.59"/>
    </reaction>
</comment>
<comment type="cofactor">
    <cofactor evidence="1">
        <name>FAD</name>
        <dbReference type="ChEBI" id="CHEBI:57692"/>
    </cofactor>
</comment>
<comment type="pathway">
    <text evidence="3">Siderophore biosynthesis; mycobactin biosynthesis.</text>
</comment>
<comment type="similarity">
    <text evidence="4">Belongs to the lysine N(6)-hydroxylase/L-ornithine N(5)-oxygenase family.</text>
</comment>
<gene>
    <name type="primary">mbtG</name>
    <name type="ordered locus">MT2446</name>
</gene>
<dbReference type="EC" id="1.14.13.59"/>
<dbReference type="EMBL" id="AE000516">
    <property type="protein sequence ID" value="AAK46741.1"/>
    <property type="molecule type" value="Genomic_DNA"/>
</dbReference>
<dbReference type="PIR" id="A70588">
    <property type="entry name" value="A70588"/>
</dbReference>
<dbReference type="RefSeq" id="WP_003899296.1">
    <property type="nucleotide sequence ID" value="NZ_KK341227.1"/>
</dbReference>
<dbReference type="SMR" id="P9WKF6"/>
<dbReference type="KEGG" id="mtc:MT2446"/>
<dbReference type="PATRIC" id="fig|83331.31.peg.2637"/>
<dbReference type="HOGENOM" id="CLU_052650_0_0_11"/>
<dbReference type="UniPathway" id="UPA00011"/>
<dbReference type="Proteomes" id="UP000001020">
    <property type="component" value="Chromosome"/>
</dbReference>
<dbReference type="GO" id="GO:0047091">
    <property type="term" value="F:L-lysine 6-monooxygenase (NADPH) activity"/>
    <property type="evidence" value="ECO:0007669"/>
    <property type="project" value="UniProtKB-EC"/>
</dbReference>
<dbReference type="GO" id="GO:0009058">
    <property type="term" value="P:biosynthetic process"/>
    <property type="evidence" value="ECO:0007669"/>
    <property type="project" value="UniProtKB-ARBA"/>
</dbReference>
<dbReference type="Gene3D" id="3.50.50.60">
    <property type="entry name" value="FAD/NAD(P)-binding domain"/>
    <property type="match status" value="1"/>
</dbReference>
<dbReference type="InterPro" id="IPR036188">
    <property type="entry name" value="FAD/NAD-bd_sf"/>
</dbReference>
<dbReference type="InterPro" id="IPR025700">
    <property type="entry name" value="Lys/Orn_oxygenase"/>
</dbReference>
<dbReference type="Pfam" id="PF13434">
    <property type="entry name" value="Lys_Orn_oxgnase"/>
    <property type="match status" value="1"/>
</dbReference>
<dbReference type="SUPFAM" id="SSF51905">
    <property type="entry name" value="FAD/NAD(P)-binding domain"/>
    <property type="match status" value="1"/>
</dbReference>
<feature type="signal peptide" evidence="2">
    <location>
        <begin position="1"/>
        <end position="21"/>
    </location>
</feature>
<feature type="chain" id="PRO_0000427662" description="L-lysine N6-monooxygenase MbtG">
    <location>
        <begin position="22"/>
        <end position="431"/>
    </location>
</feature>
<reference key="1">
    <citation type="journal article" date="2002" name="J. Bacteriol.">
        <title>Whole-genome comparison of Mycobacterium tuberculosis clinical and laboratory strains.</title>
        <authorList>
            <person name="Fleischmann R.D."/>
            <person name="Alland D."/>
            <person name="Eisen J.A."/>
            <person name="Carpenter L."/>
            <person name="White O."/>
            <person name="Peterson J.D."/>
            <person name="DeBoy R.T."/>
            <person name="Dodson R.J."/>
            <person name="Gwinn M.L."/>
            <person name="Haft D.H."/>
            <person name="Hickey E.K."/>
            <person name="Kolonay J.F."/>
            <person name="Nelson W.C."/>
            <person name="Umayam L.A."/>
            <person name="Ermolaeva M.D."/>
            <person name="Salzberg S.L."/>
            <person name="Delcher A."/>
            <person name="Utterback T.R."/>
            <person name="Weidman J.F."/>
            <person name="Khouri H.M."/>
            <person name="Gill J."/>
            <person name="Mikula A."/>
            <person name="Bishai W."/>
            <person name="Jacobs W.R. Jr."/>
            <person name="Venter J.C."/>
            <person name="Fraser C.M."/>
        </authorList>
    </citation>
    <scope>NUCLEOTIDE SEQUENCE [LARGE SCALE GENOMIC DNA]</scope>
    <source>
        <strain>CDC 1551 / Oshkosh</strain>
    </source>
</reference>
<reference key="2">
    <citation type="journal article" date="1998" name="Chem. Biol.">
        <title>Identification of a Mycobacterium tuberculosis gene cluster encoding the biosynthetic enzymes for assembly of the virulence-conferring siderophore mycobactin.</title>
        <authorList>
            <person name="Quadri L.E.N."/>
            <person name="Sello J."/>
            <person name="Keating T.A."/>
            <person name="Weinreb P.H."/>
            <person name="Walsh C.T."/>
        </authorList>
    </citation>
    <scope>ROLE IN MYCOBACTIN BIOSYNTHESIS</scope>
    <scope>PATHWAY</scope>
    <source>
        <strain>CDC 1551 / Oshkosh</strain>
    </source>
</reference>
<accession>P9WKF6</accession>
<accession>L0TCC4</accession>
<accession>O05820</accession>
<accession>Q7D793</accession>
<keyword id="KW-0274">FAD</keyword>
<keyword id="KW-0285">Flavoprotein</keyword>
<keyword id="KW-0503">Monooxygenase</keyword>
<keyword id="KW-0521">NADP</keyword>
<keyword id="KW-0560">Oxidoreductase</keyword>
<keyword id="KW-1185">Reference proteome</keyword>
<keyword id="KW-0732">Signal</keyword>
<proteinExistence type="inferred from homology"/>
<protein>
    <recommendedName>
        <fullName>L-lysine N6-monooxygenase MbtG</fullName>
        <ecNumber>1.14.13.59</ecNumber>
    </recommendedName>
    <alternativeName>
        <fullName>Lysine 6-N-hydroxylase</fullName>
    </alternativeName>
    <alternativeName>
        <fullName>Lysine N6-hydroxylase</fullName>
    </alternativeName>
    <alternativeName>
        <fullName>Lysine-N-oxygenase</fullName>
    </alternativeName>
    <alternativeName>
        <fullName>Mycobactin synthase protein G</fullName>
    </alternativeName>
</protein>
<name>MBTG_MYCTO</name>
<evidence type="ECO:0000250" key="1"/>
<evidence type="ECO:0000255" key="2"/>
<evidence type="ECO:0000269" key="3">
    <source>
    </source>
</evidence>
<evidence type="ECO:0000305" key="4"/>
<evidence type="ECO:0000305" key="5">
    <source>
    </source>
</evidence>
<sequence length="431" mass="46944">MNPTLAVLGAGAKAVAVAAKASVLRDMGVDVPDVIAVERIGVGANWQASGGWTDGAHRLGTSPEKDVGFPYRSALVPRRNAELDERMTRYSWQSYLIATASFAEWIDRGRPAPTHRRWSQYLAWVADHIGLKVIHGEVERLAVTGDRWALCTHETTVQADALMITGPGQAEKSLLPGNPRVLSIAQFWDRAAGHDRINAERVAVIGGGETAASMLNELFRHRVSTITVISPQVTLFTRGEGFFENSLFSDPTDWAALTFDERRDALARTDRGVFSATVQEALLADDRIHHLRGRVAHAVGRQGQIRLTLSTNRGSENFETVHGFDLVIDGSGADPLWFTSLFSQHTLDLLELGLGGPLTADRLQEAIGYDLAVTDVTPKLFLPTLSGLTQGPGFPNLSCLGLLSDRVLGAGIFTPTKHNDTRRSGEHQSFR</sequence>
<organism>
    <name type="scientific">Mycobacterium tuberculosis (strain CDC 1551 / Oshkosh)</name>
    <dbReference type="NCBI Taxonomy" id="83331"/>
    <lineage>
        <taxon>Bacteria</taxon>
        <taxon>Bacillati</taxon>
        <taxon>Actinomycetota</taxon>
        <taxon>Actinomycetes</taxon>
        <taxon>Mycobacteriales</taxon>
        <taxon>Mycobacteriaceae</taxon>
        <taxon>Mycobacterium</taxon>
        <taxon>Mycobacterium tuberculosis complex</taxon>
    </lineage>
</organism>